<reference key="1">
    <citation type="submission" date="2007-02" db="EMBL/GenBank/DDBJ databases">
        <title>Complete sequence of chromosome of Yersinia pestis Pestoides F.</title>
        <authorList>
            <consortium name="US DOE Joint Genome Institute"/>
            <person name="Copeland A."/>
            <person name="Lucas S."/>
            <person name="Lapidus A."/>
            <person name="Barry K."/>
            <person name="Detter J.C."/>
            <person name="Glavina del Rio T."/>
            <person name="Hammon N."/>
            <person name="Israni S."/>
            <person name="Dalin E."/>
            <person name="Tice H."/>
            <person name="Pitluck S."/>
            <person name="Di Bartolo G."/>
            <person name="Chain P."/>
            <person name="Malfatti S."/>
            <person name="Shin M."/>
            <person name="Vergez L."/>
            <person name="Schmutz J."/>
            <person name="Larimer F."/>
            <person name="Land M."/>
            <person name="Hauser L."/>
            <person name="Worsham P."/>
            <person name="Chu M."/>
            <person name="Bearden S."/>
            <person name="Garcia E."/>
            <person name="Richardson P."/>
        </authorList>
    </citation>
    <scope>NUCLEOTIDE SEQUENCE [LARGE SCALE GENOMIC DNA]</scope>
    <source>
        <strain>Pestoides F</strain>
    </source>
</reference>
<accession>A4TQL9</accession>
<name>LSRF_YERPP</name>
<organism>
    <name type="scientific">Yersinia pestis (strain Pestoides F)</name>
    <dbReference type="NCBI Taxonomy" id="386656"/>
    <lineage>
        <taxon>Bacteria</taxon>
        <taxon>Pseudomonadati</taxon>
        <taxon>Pseudomonadota</taxon>
        <taxon>Gammaproteobacteria</taxon>
        <taxon>Enterobacterales</taxon>
        <taxon>Yersiniaceae</taxon>
        <taxon>Yersinia</taxon>
    </lineage>
</organism>
<comment type="function">
    <text evidence="1">Involved in the degradation of phospho-AI-2, thereby terminating induction of the lsr operon and closing the AI-2 signaling cycle. Catalyzes the transfer of an acetyl moiety from 3-hydroxy-5-phosphonooxypentane-2,4-dione to CoA to form glycerone phosphate and acetyl-CoA.</text>
</comment>
<comment type="catalytic activity">
    <reaction evidence="1">
        <text>dihydroxyacetone phosphate + acetyl-CoA = 3-hydroxy-2,4-dioxopentyl phosphate + CoA</text>
        <dbReference type="Rhea" id="RHEA:44736"/>
        <dbReference type="ChEBI" id="CHEBI:57287"/>
        <dbReference type="ChEBI" id="CHEBI:57288"/>
        <dbReference type="ChEBI" id="CHEBI:57642"/>
        <dbReference type="ChEBI" id="CHEBI:84359"/>
        <dbReference type="EC" id="2.3.1.245"/>
    </reaction>
</comment>
<comment type="subunit">
    <text evidence="1">Homodecamer.</text>
</comment>
<comment type="subcellular location">
    <subcellularLocation>
        <location evidence="1">Cytoplasm</location>
    </subcellularLocation>
</comment>
<comment type="similarity">
    <text evidence="1">Belongs to the DeoC/FbaB aldolase family.</text>
</comment>
<gene>
    <name evidence="1" type="primary">lsrF</name>
    <name type="ordered locus">YPDSF_3223</name>
</gene>
<evidence type="ECO:0000255" key="1">
    <source>
        <dbReference type="HAMAP-Rule" id="MF_02052"/>
    </source>
</evidence>
<feature type="chain" id="PRO_0000351535" description="3-hydroxy-5-phosphonooxypentane-2,4-dione thiolase">
    <location>
        <begin position="1"/>
        <end position="291"/>
    </location>
</feature>
<feature type="active site" description="Schiff-base intermediate with substrate" evidence="1">
    <location>
        <position position="203"/>
    </location>
</feature>
<protein>
    <recommendedName>
        <fullName evidence="1">3-hydroxy-5-phosphonooxypentane-2,4-dione thiolase</fullName>
        <ecNumber evidence="1">2.3.1.245</ecNumber>
    </recommendedName>
</protein>
<sequence>MADLDDIKDGKDFGIGIPQQNPAFTLKGSGSLDWGMQSRLARIFNPKTNRTVMLAFDHGYFQGPTTGLERIDINIAPLFEYADVLMCTRGILRSVVPAAANRPVVLRASGANSILTYLSNEAVAVAMEDAVRLNACAVAAQVYIGTEHEHQSIKNIIQLIDQGMRYGMPTMAVTGVGKDMVRDQRYFSLASRIAAEMGAQVIKTYYVDSGFERIAAGCPVPIVIAGGKKLPERDALEMCYQAIDQGASGVDMGRNIFQSDAPIAMLKAVHAIVHKNENAAAAYQLFLHEQN</sequence>
<keyword id="KW-0963">Cytoplasm</keyword>
<keyword id="KW-0704">Schiff base</keyword>
<keyword id="KW-0808">Transferase</keyword>
<proteinExistence type="inferred from homology"/>
<dbReference type="EC" id="2.3.1.245" evidence="1"/>
<dbReference type="EMBL" id="CP000668">
    <property type="protein sequence ID" value="ABP41581.1"/>
    <property type="molecule type" value="Genomic_DNA"/>
</dbReference>
<dbReference type="RefSeq" id="WP_002209188.1">
    <property type="nucleotide sequence ID" value="NZ_CP009715.1"/>
</dbReference>
<dbReference type="SMR" id="A4TQL9"/>
<dbReference type="GeneID" id="57974202"/>
<dbReference type="KEGG" id="ypp:YPDSF_3223"/>
<dbReference type="PATRIC" id="fig|386656.14.peg.1121"/>
<dbReference type="GO" id="GO:0005737">
    <property type="term" value="C:cytoplasm"/>
    <property type="evidence" value="ECO:0007669"/>
    <property type="project" value="UniProtKB-SubCell"/>
</dbReference>
<dbReference type="GO" id="GO:0016747">
    <property type="term" value="F:acyltransferase activity, transferring groups other than amino-acyl groups"/>
    <property type="evidence" value="ECO:0007669"/>
    <property type="project" value="UniProtKB-UniRule"/>
</dbReference>
<dbReference type="GO" id="GO:0004332">
    <property type="term" value="F:fructose-bisphosphate aldolase activity"/>
    <property type="evidence" value="ECO:0007669"/>
    <property type="project" value="InterPro"/>
</dbReference>
<dbReference type="CDD" id="cd00958">
    <property type="entry name" value="DhnA"/>
    <property type="match status" value="1"/>
</dbReference>
<dbReference type="Gene3D" id="3.20.20.70">
    <property type="entry name" value="Aldolase class I"/>
    <property type="match status" value="1"/>
</dbReference>
<dbReference type="HAMAP" id="MF_02052">
    <property type="entry name" value="LsrF"/>
    <property type="match status" value="1"/>
</dbReference>
<dbReference type="InterPro" id="IPR013785">
    <property type="entry name" value="Aldolase_TIM"/>
</dbReference>
<dbReference type="InterPro" id="IPR002915">
    <property type="entry name" value="DeoC/FbaB/LacD_aldolase"/>
</dbReference>
<dbReference type="InterPro" id="IPR050456">
    <property type="entry name" value="DeoC/FbaB_aldolase"/>
</dbReference>
<dbReference type="InterPro" id="IPR041720">
    <property type="entry name" value="FbaB-like"/>
</dbReference>
<dbReference type="InterPro" id="IPR033673">
    <property type="entry name" value="LsrF"/>
</dbReference>
<dbReference type="NCBIfam" id="NF006081">
    <property type="entry name" value="PRK08227.1"/>
    <property type="match status" value="1"/>
</dbReference>
<dbReference type="PANTHER" id="PTHR47916:SF1">
    <property type="entry name" value="3-HYDROXY-5-PHOSPHONOOXYPENTANE-2,4-DIONE THIOLASE"/>
    <property type="match status" value="1"/>
</dbReference>
<dbReference type="PANTHER" id="PTHR47916">
    <property type="entry name" value="FRUCTOSE-BISPHOSPHATE ALDOLASE CLASS 1"/>
    <property type="match status" value="1"/>
</dbReference>
<dbReference type="Pfam" id="PF01791">
    <property type="entry name" value="DeoC"/>
    <property type="match status" value="1"/>
</dbReference>
<dbReference type="PIRSF" id="PIRSF038992">
    <property type="entry name" value="Aldolase_Ia"/>
    <property type="match status" value="1"/>
</dbReference>
<dbReference type="SMART" id="SM01133">
    <property type="entry name" value="DeoC"/>
    <property type="match status" value="1"/>
</dbReference>
<dbReference type="SUPFAM" id="SSF51569">
    <property type="entry name" value="Aldolase"/>
    <property type="match status" value="1"/>
</dbReference>